<organism>
    <name type="scientific">Alkalilimnicola ehrlichii (strain ATCC BAA-1101 / DSM 17681 / MLHE-1)</name>
    <dbReference type="NCBI Taxonomy" id="187272"/>
    <lineage>
        <taxon>Bacteria</taxon>
        <taxon>Pseudomonadati</taxon>
        <taxon>Pseudomonadota</taxon>
        <taxon>Gammaproteobacteria</taxon>
        <taxon>Chromatiales</taxon>
        <taxon>Ectothiorhodospiraceae</taxon>
        <taxon>Alkalilimnicola</taxon>
    </lineage>
</organism>
<evidence type="ECO:0000255" key="1">
    <source>
        <dbReference type="HAMAP-Rule" id="MF_00303"/>
    </source>
</evidence>
<evidence type="ECO:0000256" key="2">
    <source>
        <dbReference type="SAM" id="MobiDB-lite"/>
    </source>
</evidence>
<keyword id="KW-0131">Cell cycle</keyword>
<keyword id="KW-0132">Cell division</keyword>
<keyword id="KW-0143">Chaperone</keyword>
<keyword id="KW-0963">Cytoplasm</keyword>
<keyword id="KW-0413">Isomerase</keyword>
<keyword id="KW-1185">Reference proteome</keyword>
<keyword id="KW-0697">Rotamase</keyword>
<dbReference type="EC" id="5.2.1.8" evidence="1"/>
<dbReference type="EMBL" id="CP000453">
    <property type="protein sequence ID" value="ABI57631.1"/>
    <property type="molecule type" value="Genomic_DNA"/>
</dbReference>
<dbReference type="RefSeq" id="WP_011630025.1">
    <property type="nucleotide sequence ID" value="NC_008340.1"/>
</dbReference>
<dbReference type="SMR" id="Q0A6A6"/>
<dbReference type="KEGG" id="aeh:Mlg_2289"/>
<dbReference type="eggNOG" id="COG0544">
    <property type="taxonomic scope" value="Bacteria"/>
</dbReference>
<dbReference type="HOGENOM" id="CLU_033058_2_0_6"/>
<dbReference type="OrthoDB" id="9767721at2"/>
<dbReference type="Proteomes" id="UP000001962">
    <property type="component" value="Chromosome"/>
</dbReference>
<dbReference type="GO" id="GO:0005737">
    <property type="term" value="C:cytoplasm"/>
    <property type="evidence" value="ECO:0007669"/>
    <property type="project" value="UniProtKB-SubCell"/>
</dbReference>
<dbReference type="GO" id="GO:0003755">
    <property type="term" value="F:peptidyl-prolyl cis-trans isomerase activity"/>
    <property type="evidence" value="ECO:0007669"/>
    <property type="project" value="UniProtKB-UniRule"/>
</dbReference>
<dbReference type="GO" id="GO:0044183">
    <property type="term" value="F:protein folding chaperone"/>
    <property type="evidence" value="ECO:0007669"/>
    <property type="project" value="TreeGrafter"/>
</dbReference>
<dbReference type="GO" id="GO:0043022">
    <property type="term" value="F:ribosome binding"/>
    <property type="evidence" value="ECO:0007669"/>
    <property type="project" value="TreeGrafter"/>
</dbReference>
<dbReference type="GO" id="GO:0051083">
    <property type="term" value="P:'de novo' cotranslational protein folding"/>
    <property type="evidence" value="ECO:0007669"/>
    <property type="project" value="TreeGrafter"/>
</dbReference>
<dbReference type="GO" id="GO:0051301">
    <property type="term" value="P:cell division"/>
    <property type="evidence" value="ECO:0007669"/>
    <property type="project" value="UniProtKB-KW"/>
</dbReference>
<dbReference type="GO" id="GO:0061077">
    <property type="term" value="P:chaperone-mediated protein folding"/>
    <property type="evidence" value="ECO:0007669"/>
    <property type="project" value="TreeGrafter"/>
</dbReference>
<dbReference type="GO" id="GO:0015031">
    <property type="term" value="P:protein transport"/>
    <property type="evidence" value="ECO:0007669"/>
    <property type="project" value="UniProtKB-UniRule"/>
</dbReference>
<dbReference type="GO" id="GO:0043335">
    <property type="term" value="P:protein unfolding"/>
    <property type="evidence" value="ECO:0007669"/>
    <property type="project" value="TreeGrafter"/>
</dbReference>
<dbReference type="FunFam" id="3.10.50.40:FF:000001">
    <property type="entry name" value="Trigger factor"/>
    <property type="match status" value="1"/>
</dbReference>
<dbReference type="Gene3D" id="3.10.50.40">
    <property type="match status" value="1"/>
</dbReference>
<dbReference type="Gene3D" id="3.30.70.1050">
    <property type="entry name" value="Trigger factor ribosome-binding domain"/>
    <property type="match status" value="1"/>
</dbReference>
<dbReference type="Gene3D" id="1.10.3120.10">
    <property type="entry name" value="Trigger factor, C-terminal domain"/>
    <property type="match status" value="1"/>
</dbReference>
<dbReference type="HAMAP" id="MF_00303">
    <property type="entry name" value="Trigger_factor_Tig"/>
    <property type="match status" value="1"/>
</dbReference>
<dbReference type="InterPro" id="IPR046357">
    <property type="entry name" value="PPIase_dom_sf"/>
</dbReference>
<dbReference type="InterPro" id="IPR001179">
    <property type="entry name" value="PPIase_FKBP_dom"/>
</dbReference>
<dbReference type="InterPro" id="IPR005215">
    <property type="entry name" value="Trig_fac"/>
</dbReference>
<dbReference type="InterPro" id="IPR008880">
    <property type="entry name" value="Trigger_fac_C"/>
</dbReference>
<dbReference type="InterPro" id="IPR037041">
    <property type="entry name" value="Trigger_fac_C_sf"/>
</dbReference>
<dbReference type="InterPro" id="IPR008881">
    <property type="entry name" value="Trigger_fac_ribosome-bd_bac"/>
</dbReference>
<dbReference type="InterPro" id="IPR036611">
    <property type="entry name" value="Trigger_fac_ribosome-bd_sf"/>
</dbReference>
<dbReference type="InterPro" id="IPR027304">
    <property type="entry name" value="Trigger_fact/SurA_dom_sf"/>
</dbReference>
<dbReference type="NCBIfam" id="TIGR00115">
    <property type="entry name" value="tig"/>
    <property type="match status" value="1"/>
</dbReference>
<dbReference type="PANTHER" id="PTHR30560">
    <property type="entry name" value="TRIGGER FACTOR CHAPERONE AND PEPTIDYL-PROLYL CIS/TRANS ISOMERASE"/>
    <property type="match status" value="1"/>
</dbReference>
<dbReference type="PANTHER" id="PTHR30560:SF3">
    <property type="entry name" value="TRIGGER FACTOR-LIKE PROTEIN TIG, CHLOROPLASTIC"/>
    <property type="match status" value="1"/>
</dbReference>
<dbReference type="Pfam" id="PF00254">
    <property type="entry name" value="FKBP_C"/>
    <property type="match status" value="1"/>
</dbReference>
<dbReference type="Pfam" id="PF05698">
    <property type="entry name" value="Trigger_C"/>
    <property type="match status" value="1"/>
</dbReference>
<dbReference type="Pfam" id="PF05697">
    <property type="entry name" value="Trigger_N"/>
    <property type="match status" value="1"/>
</dbReference>
<dbReference type="PIRSF" id="PIRSF003095">
    <property type="entry name" value="Trigger_factor"/>
    <property type="match status" value="1"/>
</dbReference>
<dbReference type="SUPFAM" id="SSF54534">
    <property type="entry name" value="FKBP-like"/>
    <property type="match status" value="1"/>
</dbReference>
<dbReference type="SUPFAM" id="SSF109998">
    <property type="entry name" value="Triger factor/SurA peptide-binding domain-like"/>
    <property type="match status" value="1"/>
</dbReference>
<dbReference type="SUPFAM" id="SSF102735">
    <property type="entry name" value="Trigger factor ribosome-binding domain"/>
    <property type="match status" value="1"/>
</dbReference>
<dbReference type="PROSITE" id="PS50059">
    <property type="entry name" value="FKBP_PPIASE"/>
    <property type="match status" value="1"/>
</dbReference>
<feature type="chain" id="PRO_1000022641" description="Trigger factor">
    <location>
        <begin position="1"/>
        <end position="450"/>
    </location>
</feature>
<feature type="domain" description="PPIase FKBP-type" evidence="1">
    <location>
        <begin position="161"/>
        <end position="246"/>
    </location>
</feature>
<feature type="region of interest" description="Disordered" evidence="2">
    <location>
        <begin position="422"/>
        <end position="450"/>
    </location>
</feature>
<feature type="compositionally biased region" description="Basic and acidic residues" evidence="2">
    <location>
        <begin position="441"/>
        <end position="450"/>
    </location>
</feature>
<reference key="1">
    <citation type="submission" date="2006-08" db="EMBL/GenBank/DDBJ databases">
        <title>Complete sequence of Alkalilimnicola ehrilichei MLHE-1.</title>
        <authorList>
            <person name="Copeland A."/>
            <person name="Lucas S."/>
            <person name="Lapidus A."/>
            <person name="Barry K."/>
            <person name="Detter J.C."/>
            <person name="Glavina del Rio T."/>
            <person name="Hammon N."/>
            <person name="Israni S."/>
            <person name="Dalin E."/>
            <person name="Tice H."/>
            <person name="Pitluck S."/>
            <person name="Sims D."/>
            <person name="Brettin T."/>
            <person name="Bruce D."/>
            <person name="Han C."/>
            <person name="Tapia R."/>
            <person name="Gilna P."/>
            <person name="Schmutz J."/>
            <person name="Larimer F."/>
            <person name="Land M."/>
            <person name="Hauser L."/>
            <person name="Kyrpides N."/>
            <person name="Mikhailova N."/>
            <person name="Oremland R.S."/>
            <person name="Hoeft S.E."/>
            <person name="Switzer-Blum J."/>
            <person name="Kulp T."/>
            <person name="King G."/>
            <person name="Tabita R."/>
            <person name="Witte B."/>
            <person name="Santini J.M."/>
            <person name="Basu P."/>
            <person name="Hollibaugh J.T."/>
            <person name="Xie G."/>
            <person name="Stolz J.F."/>
            <person name="Richardson P."/>
        </authorList>
    </citation>
    <scope>NUCLEOTIDE SEQUENCE [LARGE SCALE GENOMIC DNA]</scope>
    <source>
        <strain>ATCC BAA-1101 / DSM 17681 / MLHE-1</strain>
    </source>
</reference>
<proteinExistence type="inferred from homology"/>
<protein>
    <recommendedName>
        <fullName evidence="1">Trigger factor</fullName>
        <shortName evidence="1">TF</shortName>
        <ecNumber evidence="1">5.2.1.8</ecNumber>
    </recommendedName>
    <alternativeName>
        <fullName evidence="1">PPIase</fullName>
    </alternativeName>
</protein>
<comment type="function">
    <text evidence="1">Involved in protein export. Acts as a chaperone by maintaining the newly synthesized protein in an open conformation. Functions as a peptidyl-prolyl cis-trans isomerase.</text>
</comment>
<comment type="catalytic activity">
    <reaction evidence="1">
        <text>[protein]-peptidylproline (omega=180) = [protein]-peptidylproline (omega=0)</text>
        <dbReference type="Rhea" id="RHEA:16237"/>
        <dbReference type="Rhea" id="RHEA-COMP:10747"/>
        <dbReference type="Rhea" id="RHEA-COMP:10748"/>
        <dbReference type="ChEBI" id="CHEBI:83833"/>
        <dbReference type="ChEBI" id="CHEBI:83834"/>
        <dbReference type="EC" id="5.2.1.8"/>
    </reaction>
</comment>
<comment type="subcellular location">
    <subcellularLocation>
        <location>Cytoplasm</location>
    </subcellularLocation>
    <text evidence="1">About half TF is bound to the ribosome near the polypeptide exit tunnel while the other half is free in the cytoplasm.</text>
</comment>
<comment type="domain">
    <text evidence="1">Consists of 3 domains; the N-terminus binds the ribosome, the middle domain has PPIase activity, while the C-terminus has intrinsic chaperone activity on its own.</text>
</comment>
<comment type="similarity">
    <text evidence="1">Belongs to the FKBP-type PPIase family. Tig subfamily.</text>
</comment>
<gene>
    <name evidence="1" type="primary">tig</name>
    <name type="ordered locus">Mlg_2289</name>
</gene>
<accession>Q0A6A6</accession>
<sequence length="450" mass="50635">MQVSVETTEGLGRRMTVQVPAEQVEEKVDQRLRSLRGNVRMDGFRPGKVPLKVVRKRYGPQVRGEVLSELVQSTYSEALREKELRPAGNPEIEPKQTEEGKDLEYQATFEVLPSFEVTGLDQIKVERPQVEITDADVDEVLERLRKQQAEYNEVDRASQEGDRVVIDFKGTVDGEEFSGNEGNDVPVVLGAGQMPPAFEEGLTGVKAGDETTIEHTFPEEFPDSEVAGKAGQFAVTVKTVEAPEYPEIDDAFAEKVGVKEGGVEKLREAIKTNLERERDQTVASRVKHQVMDQLLDITDIELPKVLVDAEIDQLRQQEQSRQQQSGQEEPDDLPAALFEENARRRVALGLIVNELVRSNDIKLDRDRVMQSLQEMAAGYEQPEEVLRYYAQNRQLMEGVEVAVLEDQVVDYVVQQAQVEDKPMSLQELMSPQQPEAESAEGESKQDETKE</sequence>
<name>TIG_ALKEH</name>